<organism>
    <name type="scientific">Campylobacter concisus (strain 13826)</name>
    <dbReference type="NCBI Taxonomy" id="360104"/>
    <lineage>
        <taxon>Bacteria</taxon>
        <taxon>Pseudomonadati</taxon>
        <taxon>Campylobacterota</taxon>
        <taxon>Epsilonproteobacteria</taxon>
        <taxon>Campylobacterales</taxon>
        <taxon>Campylobacteraceae</taxon>
        <taxon>Campylobacter</taxon>
    </lineage>
</organism>
<dbReference type="EMBL" id="CP000792">
    <property type="protein sequence ID" value="EAT98714.1"/>
    <property type="molecule type" value="Genomic_DNA"/>
</dbReference>
<dbReference type="RefSeq" id="WP_012140104.1">
    <property type="nucleotide sequence ID" value="NC_009802.2"/>
</dbReference>
<dbReference type="SMR" id="A7ZEJ1"/>
<dbReference type="STRING" id="360104.CCC13826_1960"/>
<dbReference type="KEGG" id="cco:CCC13826_1960"/>
<dbReference type="eggNOG" id="COG1699">
    <property type="taxonomic scope" value="Bacteria"/>
</dbReference>
<dbReference type="HOGENOM" id="CLU_112356_2_0_7"/>
<dbReference type="OrthoDB" id="5372942at2"/>
<dbReference type="Proteomes" id="UP000001121">
    <property type="component" value="Chromosome"/>
</dbReference>
<dbReference type="GO" id="GO:0005737">
    <property type="term" value="C:cytoplasm"/>
    <property type="evidence" value="ECO:0007669"/>
    <property type="project" value="UniProtKB-SubCell"/>
</dbReference>
<dbReference type="GO" id="GO:0044780">
    <property type="term" value="P:bacterial-type flagellum assembly"/>
    <property type="evidence" value="ECO:0007669"/>
    <property type="project" value="UniProtKB-UniRule"/>
</dbReference>
<dbReference type="GO" id="GO:0006417">
    <property type="term" value="P:regulation of translation"/>
    <property type="evidence" value="ECO:0007669"/>
    <property type="project" value="UniProtKB-KW"/>
</dbReference>
<dbReference type="Gene3D" id="2.30.290.10">
    <property type="entry name" value="BH3618-like"/>
    <property type="match status" value="1"/>
</dbReference>
<dbReference type="HAMAP" id="MF_01185">
    <property type="entry name" value="FliW"/>
    <property type="match status" value="1"/>
</dbReference>
<dbReference type="InterPro" id="IPR003775">
    <property type="entry name" value="Flagellar_assembly_factor_FliW"/>
</dbReference>
<dbReference type="InterPro" id="IPR024046">
    <property type="entry name" value="Flagellar_assmbl_FliW_dom_sf"/>
</dbReference>
<dbReference type="NCBIfam" id="NF009790">
    <property type="entry name" value="PRK13282.1"/>
    <property type="match status" value="1"/>
</dbReference>
<dbReference type="PANTHER" id="PTHR39190">
    <property type="entry name" value="FLAGELLAR ASSEMBLY FACTOR FLIW"/>
    <property type="match status" value="1"/>
</dbReference>
<dbReference type="PANTHER" id="PTHR39190:SF1">
    <property type="entry name" value="FLAGELLAR ASSEMBLY FACTOR FLIW"/>
    <property type="match status" value="1"/>
</dbReference>
<dbReference type="Pfam" id="PF02623">
    <property type="entry name" value="FliW"/>
    <property type="match status" value="1"/>
</dbReference>
<dbReference type="SUPFAM" id="SSF141457">
    <property type="entry name" value="BH3618-like"/>
    <property type="match status" value="1"/>
</dbReference>
<accession>A7ZEJ1</accession>
<protein>
    <recommendedName>
        <fullName evidence="1">Flagellar assembly factor FliW</fullName>
    </recommendedName>
</protein>
<name>FLIW_CAMC1</name>
<feature type="chain" id="PRO_1000073082" description="Flagellar assembly factor FliW">
    <location>
        <begin position="1"/>
        <end position="127"/>
    </location>
</feature>
<reference key="1">
    <citation type="submission" date="2007-10" db="EMBL/GenBank/DDBJ databases">
        <title>Genome sequence of Campylobacter concisus 13826 isolated from human feces.</title>
        <authorList>
            <person name="Fouts D.E."/>
            <person name="Mongodin E.F."/>
            <person name="Puiu D."/>
            <person name="Sebastian Y."/>
            <person name="Miller W.G."/>
            <person name="Mandrell R.E."/>
            <person name="On S."/>
            <person name="Nelson K.E."/>
        </authorList>
    </citation>
    <scope>NUCLEOTIDE SEQUENCE [LARGE SCALE GENOMIC DNA]</scope>
    <source>
        <strain>13826</strain>
    </source>
</reference>
<evidence type="ECO:0000255" key="1">
    <source>
        <dbReference type="HAMAP-Rule" id="MF_01185"/>
    </source>
</evidence>
<gene>
    <name evidence="1" type="primary">fliW</name>
    <name type="ordered locus">Ccon26_13500</name>
    <name type="ORF">CCC13826_1960</name>
</gene>
<keyword id="KW-1005">Bacterial flagellum biogenesis</keyword>
<keyword id="KW-0143">Chaperone</keyword>
<keyword id="KW-0963">Cytoplasm</keyword>
<keyword id="KW-0810">Translation regulation</keyword>
<sequence length="127" mass="14734">MIFSVKSPILGFEHIKTMELIELDKFFVKLASKDDETSFTMINPFALRSYEFDIPSYYEELMDIKESSQLRIYNIIVVALPLEKSTVNFVAPIVCNMDNMTLSQVVLDVTKYPQYGQAEMIENFIQK</sequence>
<proteinExistence type="inferred from homology"/>
<comment type="function">
    <text evidence="1">Acts as an anti-CsrA protein, binds CsrA and prevents it from repressing translation of its target genes, one of which is flagellin. Binds to flagellin and participates in the assembly of the flagellum.</text>
</comment>
<comment type="subunit">
    <text evidence="1">Interacts with translational regulator CsrA and flagellin(s).</text>
</comment>
<comment type="subcellular location">
    <subcellularLocation>
        <location evidence="1">Cytoplasm</location>
    </subcellularLocation>
</comment>
<comment type="similarity">
    <text evidence="1">Belongs to the FliW family.</text>
</comment>